<sequence>MENAISTVPEFLPALPEILLAVGAMALLMYGVFRKDCDARETSLGALALFALVGAFLIIEPNAYVETFGGMFVIDGFTKFMKLLILLAAAAAIVMSLTFIRREGMDRFEYPVLIILATLGMFMMVSANGLISLYMGLELQSLSLYVIAAFHRDNTRATEAGLKYFVLGALASGMLLYGASLIYGFTGSVQFGSIATVLQADGTNIGVIFGIVFVLAGLAFKISAVPFHMWTPDVYEGAPTPVTAFFAGAPKVAAMALILRVLFVAFPSMESEWQQIIVFIAIASMVLGAFAAIGQSNIKRLMAYSSISHMGFAMVGLAAGTPEGVRGVLIYLVIYVVMNAGVFCCILAMQRKEGYVENISDLAGLSRNQPMVAFMMAMLMFSLAGVPPLAGFFGKFYVFMAAVEAGLYPLAVIGVLASVVGAFYYLRIVKIMYFDEAAEPFIQPMPGELTAVLGISGVFTLFFFVYPAPLILASQAAVRALLP</sequence>
<evidence type="ECO:0000255" key="1">
    <source>
        <dbReference type="HAMAP-Rule" id="MF_00445"/>
    </source>
</evidence>
<feature type="chain" id="PRO_0000391198" description="NADH-quinone oxidoreductase subunit N">
    <location>
        <begin position="1"/>
        <end position="483"/>
    </location>
</feature>
<feature type="transmembrane region" description="Helical" evidence="1">
    <location>
        <begin position="13"/>
        <end position="33"/>
    </location>
</feature>
<feature type="transmembrane region" description="Helical" evidence="1">
    <location>
        <begin position="45"/>
        <end position="65"/>
    </location>
</feature>
<feature type="transmembrane region" description="Helical" evidence="1">
    <location>
        <begin position="80"/>
        <end position="100"/>
    </location>
</feature>
<feature type="transmembrane region" description="Helical" evidence="1">
    <location>
        <begin position="111"/>
        <end position="131"/>
    </location>
</feature>
<feature type="transmembrane region" description="Helical" evidence="1">
    <location>
        <begin position="165"/>
        <end position="185"/>
    </location>
</feature>
<feature type="transmembrane region" description="Helical" evidence="1">
    <location>
        <begin position="205"/>
        <end position="225"/>
    </location>
</feature>
<feature type="transmembrane region" description="Helical" evidence="1">
    <location>
        <begin position="244"/>
        <end position="264"/>
    </location>
</feature>
<feature type="transmembrane region" description="Helical" evidence="1">
    <location>
        <begin position="276"/>
        <end position="296"/>
    </location>
</feature>
<feature type="transmembrane region" description="Helical" evidence="1">
    <location>
        <begin position="301"/>
        <end position="321"/>
    </location>
</feature>
<feature type="transmembrane region" description="Helical" evidence="1">
    <location>
        <begin position="328"/>
        <end position="348"/>
    </location>
</feature>
<feature type="transmembrane region" description="Helical" evidence="1">
    <location>
        <begin position="373"/>
        <end position="393"/>
    </location>
</feature>
<feature type="transmembrane region" description="Helical" evidence="1">
    <location>
        <begin position="407"/>
        <end position="429"/>
    </location>
</feature>
<feature type="transmembrane region" description="Helical" evidence="1">
    <location>
        <begin position="452"/>
        <end position="472"/>
    </location>
</feature>
<protein>
    <recommendedName>
        <fullName evidence="1">NADH-quinone oxidoreductase subunit N</fullName>
        <ecNumber evidence="1">7.1.1.-</ecNumber>
    </recommendedName>
    <alternativeName>
        <fullName evidence="1">NADH dehydrogenase I subunit N</fullName>
    </alternativeName>
    <alternativeName>
        <fullName evidence="1">NDH-1 subunit N</fullName>
    </alternativeName>
</protein>
<organism>
    <name type="scientific">Parvibaculum lavamentivorans (strain DS-1 / DSM 13023 / NCIMB 13966)</name>
    <dbReference type="NCBI Taxonomy" id="402881"/>
    <lineage>
        <taxon>Bacteria</taxon>
        <taxon>Pseudomonadati</taxon>
        <taxon>Pseudomonadota</taxon>
        <taxon>Alphaproteobacteria</taxon>
        <taxon>Hyphomicrobiales</taxon>
        <taxon>Parvibaculaceae</taxon>
        <taxon>Parvibaculum</taxon>
    </lineage>
</organism>
<reference key="1">
    <citation type="journal article" date="2011" name="Stand. Genomic Sci.">
        <title>Complete genome sequence of Parvibaculum lavamentivorans type strain (DS-1(T)).</title>
        <authorList>
            <person name="Schleheck D."/>
            <person name="Weiss M."/>
            <person name="Pitluck S."/>
            <person name="Bruce D."/>
            <person name="Land M.L."/>
            <person name="Han S."/>
            <person name="Saunders E."/>
            <person name="Tapia R."/>
            <person name="Detter C."/>
            <person name="Brettin T."/>
            <person name="Han J."/>
            <person name="Woyke T."/>
            <person name="Goodwin L."/>
            <person name="Pennacchio L."/>
            <person name="Nolan M."/>
            <person name="Cook A.M."/>
            <person name="Kjelleberg S."/>
            <person name="Thomas T."/>
        </authorList>
    </citation>
    <scope>NUCLEOTIDE SEQUENCE [LARGE SCALE GENOMIC DNA]</scope>
    <source>
        <strain>DS-1 / DSM 13023 / NCIMB 13966</strain>
    </source>
</reference>
<comment type="function">
    <text evidence="1">NDH-1 shuttles electrons from NADH, via FMN and iron-sulfur (Fe-S) centers, to quinones in the respiratory chain. The immediate electron acceptor for the enzyme in this species is believed to be ubiquinone. Couples the redox reaction to proton translocation (for every two electrons transferred, four hydrogen ions are translocated across the cytoplasmic membrane), and thus conserves the redox energy in a proton gradient.</text>
</comment>
<comment type="catalytic activity">
    <reaction evidence="1">
        <text>a quinone + NADH + 5 H(+)(in) = a quinol + NAD(+) + 4 H(+)(out)</text>
        <dbReference type="Rhea" id="RHEA:57888"/>
        <dbReference type="ChEBI" id="CHEBI:15378"/>
        <dbReference type="ChEBI" id="CHEBI:24646"/>
        <dbReference type="ChEBI" id="CHEBI:57540"/>
        <dbReference type="ChEBI" id="CHEBI:57945"/>
        <dbReference type="ChEBI" id="CHEBI:132124"/>
    </reaction>
</comment>
<comment type="subunit">
    <text evidence="1">NDH-1 is composed of 14 different subunits. Subunits NuoA, H, J, K, L, M, N constitute the membrane sector of the complex.</text>
</comment>
<comment type="subcellular location">
    <subcellularLocation>
        <location evidence="1">Cell inner membrane</location>
        <topology evidence="1">Multi-pass membrane protein</topology>
    </subcellularLocation>
</comment>
<comment type="similarity">
    <text evidence="1">Belongs to the complex I subunit 2 family.</text>
</comment>
<proteinExistence type="inferred from homology"/>
<name>NUON_PARL1</name>
<accession>A7HY36</accession>
<gene>
    <name evidence="1" type="primary">nuoN</name>
    <name type="ordered locus">Plav_3213</name>
</gene>
<keyword id="KW-0997">Cell inner membrane</keyword>
<keyword id="KW-1003">Cell membrane</keyword>
<keyword id="KW-0472">Membrane</keyword>
<keyword id="KW-0520">NAD</keyword>
<keyword id="KW-0874">Quinone</keyword>
<keyword id="KW-1185">Reference proteome</keyword>
<keyword id="KW-1278">Translocase</keyword>
<keyword id="KW-0812">Transmembrane</keyword>
<keyword id="KW-1133">Transmembrane helix</keyword>
<keyword id="KW-0813">Transport</keyword>
<keyword id="KW-0830">Ubiquinone</keyword>
<dbReference type="EC" id="7.1.1.-" evidence="1"/>
<dbReference type="EMBL" id="CP000774">
    <property type="protein sequence ID" value="ABS64819.1"/>
    <property type="molecule type" value="Genomic_DNA"/>
</dbReference>
<dbReference type="RefSeq" id="WP_012112147.1">
    <property type="nucleotide sequence ID" value="NC_009719.1"/>
</dbReference>
<dbReference type="SMR" id="A7HY36"/>
<dbReference type="STRING" id="402881.Plav_3213"/>
<dbReference type="KEGG" id="pla:Plav_3213"/>
<dbReference type="eggNOG" id="COG1007">
    <property type="taxonomic scope" value="Bacteria"/>
</dbReference>
<dbReference type="HOGENOM" id="CLU_007100_1_3_5"/>
<dbReference type="OrthoDB" id="9811718at2"/>
<dbReference type="Proteomes" id="UP000006377">
    <property type="component" value="Chromosome"/>
</dbReference>
<dbReference type="GO" id="GO:0005886">
    <property type="term" value="C:plasma membrane"/>
    <property type="evidence" value="ECO:0007669"/>
    <property type="project" value="UniProtKB-SubCell"/>
</dbReference>
<dbReference type="GO" id="GO:0008137">
    <property type="term" value="F:NADH dehydrogenase (ubiquinone) activity"/>
    <property type="evidence" value="ECO:0007669"/>
    <property type="project" value="InterPro"/>
</dbReference>
<dbReference type="GO" id="GO:0050136">
    <property type="term" value="F:NADH:ubiquinone reductase (non-electrogenic) activity"/>
    <property type="evidence" value="ECO:0007669"/>
    <property type="project" value="UniProtKB-UniRule"/>
</dbReference>
<dbReference type="GO" id="GO:0048038">
    <property type="term" value="F:quinone binding"/>
    <property type="evidence" value="ECO:0007669"/>
    <property type="project" value="UniProtKB-KW"/>
</dbReference>
<dbReference type="GO" id="GO:0042773">
    <property type="term" value="P:ATP synthesis coupled electron transport"/>
    <property type="evidence" value="ECO:0007669"/>
    <property type="project" value="InterPro"/>
</dbReference>
<dbReference type="HAMAP" id="MF_00445">
    <property type="entry name" value="NDH1_NuoN_1"/>
    <property type="match status" value="1"/>
</dbReference>
<dbReference type="InterPro" id="IPR010096">
    <property type="entry name" value="NADH-Q_OxRdtase_suN/2"/>
</dbReference>
<dbReference type="InterPro" id="IPR001750">
    <property type="entry name" value="ND/Mrp_TM"/>
</dbReference>
<dbReference type="NCBIfam" id="TIGR01770">
    <property type="entry name" value="NDH_I_N"/>
    <property type="match status" value="1"/>
</dbReference>
<dbReference type="NCBIfam" id="NF004440">
    <property type="entry name" value="PRK05777.1-3"/>
    <property type="match status" value="1"/>
</dbReference>
<dbReference type="PANTHER" id="PTHR22773">
    <property type="entry name" value="NADH DEHYDROGENASE"/>
    <property type="match status" value="1"/>
</dbReference>
<dbReference type="Pfam" id="PF00361">
    <property type="entry name" value="Proton_antipo_M"/>
    <property type="match status" value="1"/>
</dbReference>
<dbReference type="PRINTS" id="PR01434">
    <property type="entry name" value="NADHDHGNASE5"/>
</dbReference>